<proteinExistence type="evidence at protein level"/>
<comment type="function">
    <text evidence="1">Regulator of p53/TP53 stability and function. Inhibits MDM2-mediated degradation of p53/TP53 possibly by cooperating in part with TXNIP. May be involved transcriptional regulation. In vitro has intrinsic transactivation activity enhanced by EP300. May be a transcriptional activator required for the expression of glycolytic genes (By similarity). Involved in regulation of cell cycle progression (PubMed:26711270). Proposed to disrupt Rb-E2F binding leading to transcriptional activation of E2F proteins (PubMed:19640839). The cell cycle -regulating function may depend on its RUVBL1-mediated association with the R2TP complex. May play a role in regulation of pre-mRNA splicing (By similarity). Participates together with DDX39A in mRNA nuclear export (By similarity).</text>
</comment>
<comment type="subunit">
    <text evidence="1">Interacts with TP53, MDM2, TXNIP. Interacts (phosphorylated) with PIH1D1. Interacts with RUVBL1 mediating the PIH1D1-independent association with the R2TP complex. Interacts with RB1, RBL1 and RBL2; ECD competes with E2F1 for binding to hypophospshorylated RB1. Interacts with EP300. Interacts with DDX39A.</text>
</comment>
<comment type="interaction">
    <interactant intactId="EBI-7922565">
        <id>Q9CS74</id>
    </interactant>
    <interactant intactId="EBI-7922331">
        <id>Q9R000</id>
        <label>Itgb1bp2</label>
    </interactant>
    <organismsDiffer>false</organismsDiffer>
    <experiments>2</experiments>
</comment>
<comment type="subcellular location">
    <subcellularLocation>
        <location>Cytoplasm</location>
    </subcellularLocation>
    <subcellularLocation>
        <location evidence="1">Nucleus</location>
    </subcellularLocation>
</comment>
<comment type="PTM">
    <text evidence="1">Phosphorylated predominantly by CK2 on two serine-containing clusters; involved in cell cycle regulation activity.</text>
</comment>
<comment type="disruption phenotype">
    <text evidence="4">Embryonic lethal.</text>
</comment>
<comment type="similarity">
    <text evidence="5">Belongs to the ECD family.</text>
</comment>
<sequence>MEGSGKLAMVEDAVEYHLFLIPDKARGTEEHREILQKYIERIMTQFAPILVPYIWQNQPFNLKYKPAKGGVPAHMYGMTKFGDNIEDEWFIVYVIKQITKEFPELVARVEDNDGEFLLIEAADFLPKWLDPDNSANRVFFHHGELCIIPVPRKSERIPWLPMTPPTIQQALSIISAHPEAVLASESIQAAVDRRVSGYPERVEASLHRAHCFLPAGIVAVLKQQPRLLSAAVQAFYLRDPIDLRACRVFKTFLPETRIMASVTFTKCLYAQLVQQKFVPDRRSGYGLPPPSHPQYRAYELGMKLAHGFEILCSKCSPHFSDSRKSLVTASPLWASFLESLKRNDYFKGLMDGSAQYQERLEMAKNYFQLSIHRPESSLAMSPGEEILTVLQTQPFDVAELKTEEADLPPEDDDQWLDLSPDQLDQLLQDAAGRKESQPGPQKEELQNYDVAQVSDSMKAFISKVSSHKGAELPRDPSEAPITFDADSFLNYFDKILGAKPQESDSEDDPGEEDVEGVDSDDDVGFEAQESESLKGALGSLKSYMARMDQELAHTSMGRSFTTRERLNKDPPSHTANDNSDEEDSGAGDCAVEAVDVDLNLISNILESYSSQAGLAGPASNLLHSMGVRLPDNADHNPQVSQ</sequence>
<reference key="1">
    <citation type="journal article" date="2005" name="Science">
        <title>The transcriptional landscape of the mammalian genome.</title>
        <authorList>
            <person name="Carninci P."/>
            <person name="Kasukawa T."/>
            <person name="Katayama S."/>
            <person name="Gough J."/>
            <person name="Frith M.C."/>
            <person name="Maeda N."/>
            <person name="Oyama R."/>
            <person name="Ravasi T."/>
            <person name="Lenhard B."/>
            <person name="Wells C."/>
            <person name="Kodzius R."/>
            <person name="Shimokawa K."/>
            <person name="Bajic V.B."/>
            <person name="Brenner S.E."/>
            <person name="Batalov S."/>
            <person name="Forrest A.R."/>
            <person name="Zavolan M."/>
            <person name="Davis M.J."/>
            <person name="Wilming L.G."/>
            <person name="Aidinis V."/>
            <person name="Allen J.E."/>
            <person name="Ambesi-Impiombato A."/>
            <person name="Apweiler R."/>
            <person name="Aturaliya R.N."/>
            <person name="Bailey T.L."/>
            <person name="Bansal M."/>
            <person name="Baxter L."/>
            <person name="Beisel K.W."/>
            <person name="Bersano T."/>
            <person name="Bono H."/>
            <person name="Chalk A.M."/>
            <person name="Chiu K.P."/>
            <person name="Choudhary V."/>
            <person name="Christoffels A."/>
            <person name="Clutterbuck D.R."/>
            <person name="Crowe M.L."/>
            <person name="Dalla E."/>
            <person name="Dalrymple B.P."/>
            <person name="de Bono B."/>
            <person name="Della Gatta G."/>
            <person name="di Bernardo D."/>
            <person name="Down T."/>
            <person name="Engstrom P."/>
            <person name="Fagiolini M."/>
            <person name="Faulkner G."/>
            <person name="Fletcher C.F."/>
            <person name="Fukushima T."/>
            <person name="Furuno M."/>
            <person name="Futaki S."/>
            <person name="Gariboldi M."/>
            <person name="Georgii-Hemming P."/>
            <person name="Gingeras T.R."/>
            <person name="Gojobori T."/>
            <person name="Green R.E."/>
            <person name="Gustincich S."/>
            <person name="Harbers M."/>
            <person name="Hayashi Y."/>
            <person name="Hensch T.K."/>
            <person name="Hirokawa N."/>
            <person name="Hill D."/>
            <person name="Huminiecki L."/>
            <person name="Iacono M."/>
            <person name="Ikeo K."/>
            <person name="Iwama A."/>
            <person name="Ishikawa T."/>
            <person name="Jakt M."/>
            <person name="Kanapin A."/>
            <person name="Katoh M."/>
            <person name="Kawasawa Y."/>
            <person name="Kelso J."/>
            <person name="Kitamura H."/>
            <person name="Kitano H."/>
            <person name="Kollias G."/>
            <person name="Krishnan S.P."/>
            <person name="Kruger A."/>
            <person name="Kummerfeld S.K."/>
            <person name="Kurochkin I.V."/>
            <person name="Lareau L.F."/>
            <person name="Lazarevic D."/>
            <person name="Lipovich L."/>
            <person name="Liu J."/>
            <person name="Liuni S."/>
            <person name="McWilliam S."/>
            <person name="Madan Babu M."/>
            <person name="Madera M."/>
            <person name="Marchionni L."/>
            <person name="Matsuda H."/>
            <person name="Matsuzawa S."/>
            <person name="Miki H."/>
            <person name="Mignone F."/>
            <person name="Miyake S."/>
            <person name="Morris K."/>
            <person name="Mottagui-Tabar S."/>
            <person name="Mulder N."/>
            <person name="Nakano N."/>
            <person name="Nakauchi H."/>
            <person name="Ng P."/>
            <person name="Nilsson R."/>
            <person name="Nishiguchi S."/>
            <person name="Nishikawa S."/>
            <person name="Nori F."/>
            <person name="Ohara O."/>
            <person name="Okazaki Y."/>
            <person name="Orlando V."/>
            <person name="Pang K.C."/>
            <person name="Pavan W.J."/>
            <person name="Pavesi G."/>
            <person name="Pesole G."/>
            <person name="Petrovsky N."/>
            <person name="Piazza S."/>
            <person name="Reed J."/>
            <person name="Reid J.F."/>
            <person name="Ring B.Z."/>
            <person name="Ringwald M."/>
            <person name="Rost B."/>
            <person name="Ruan Y."/>
            <person name="Salzberg S.L."/>
            <person name="Sandelin A."/>
            <person name="Schneider C."/>
            <person name="Schoenbach C."/>
            <person name="Sekiguchi K."/>
            <person name="Semple C.A."/>
            <person name="Seno S."/>
            <person name="Sessa L."/>
            <person name="Sheng Y."/>
            <person name="Shibata Y."/>
            <person name="Shimada H."/>
            <person name="Shimada K."/>
            <person name="Silva D."/>
            <person name="Sinclair B."/>
            <person name="Sperling S."/>
            <person name="Stupka E."/>
            <person name="Sugiura K."/>
            <person name="Sultana R."/>
            <person name="Takenaka Y."/>
            <person name="Taki K."/>
            <person name="Tammoja K."/>
            <person name="Tan S.L."/>
            <person name="Tang S."/>
            <person name="Taylor M.S."/>
            <person name="Tegner J."/>
            <person name="Teichmann S.A."/>
            <person name="Ueda H.R."/>
            <person name="van Nimwegen E."/>
            <person name="Verardo R."/>
            <person name="Wei C.L."/>
            <person name="Yagi K."/>
            <person name="Yamanishi H."/>
            <person name="Zabarovsky E."/>
            <person name="Zhu S."/>
            <person name="Zimmer A."/>
            <person name="Hide W."/>
            <person name="Bult C."/>
            <person name="Grimmond S.M."/>
            <person name="Teasdale R.D."/>
            <person name="Liu E.T."/>
            <person name="Brusic V."/>
            <person name="Quackenbush J."/>
            <person name="Wahlestedt C."/>
            <person name="Mattick J.S."/>
            <person name="Hume D.A."/>
            <person name="Kai C."/>
            <person name="Sasaki D."/>
            <person name="Tomaru Y."/>
            <person name="Fukuda S."/>
            <person name="Kanamori-Katayama M."/>
            <person name="Suzuki M."/>
            <person name="Aoki J."/>
            <person name="Arakawa T."/>
            <person name="Iida J."/>
            <person name="Imamura K."/>
            <person name="Itoh M."/>
            <person name="Kato T."/>
            <person name="Kawaji H."/>
            <person name="Kawagashira N."/>
            <person name="Kawashima T."/>
            <person name="Kojima M."/>
            <person name="Kondo S."/>
            <person name="Konno H."/>
            <person name="Nakano K."/>
            <person name="Ninomiya N."/>
            <person name="Nishio T."/>
            <person name="Okada M."/>
            <person name="Plessy C."/>
            <person name="Shibata K."/>
            <person name="Shiraki T."/>
            <person name="Suzuki S."/>
            <person name="Tagami M."/>
            <person name="Waki K."/>
            <person name="Watahiki A."/>
            <person name="Okamura-Oho Y."/>
            <person name="Suzuki H."/>
            <person name="Kawai J."/>
            <person name="Hayashizaki Y."/>
        </authorList>
    </citation>
    <scope>NUCLEOTIDE SEQUENCE [LARGE SCALE MRNA]</scope>
    <source>
        <strain>C57BL/6J</strain>
        <tissue>Embryo</tissue>
    </source>
</reference>
<reference key="2">
    <citation type="journal article" date="2004" name="Genome Res.">
        <title>The status, quality, and expansion of the NIH full-length cDNA project: the Mammalian Gene Collection (MGC).</title>
        <authorList>
            <consortium name="The MGC Project Team"/>
        </authorList>
    </citation>
    <scope>NUCLEOTIDE SEQUENCE [LARGE SCALE MRNA]</scope>
    <source>
        <tissue>Kidney</tissue>
    </source>
</reference>
<reference key="3">
    <citation type="journal article" date="2009" name="J. Biol. Chem.">
        <title>Role of mammalian Ecdysoneless in cell cycle regulation.</title>
        <authorList>
            <person name="Kim J.H."/>
            <person name="Gurumurthy C.B."/>
            <person name="Naramura M."/>
            <person name="Zhang Y."/>
            <person name="Dudley A.T."/>
            <person name="Doglio L."/>
            <person name="Band H."/>
            <person name="Band V."/>
        </authorList>
    </citation>
    <scope>FUNCTION</scope>
    <scope>DISRUPTION PHENOTYPE</scope>
</reference>
<reference key="4">
    <citation type="journal article" date="2010" name="Cell">
        <title>A tissue-specific atlas of mouse protein phosphorylation and expression.</title>
        <authorList>
            <person name="Huttlin E.L."/>
            <person name="Jedrychowski M.P."/>
            <person name="Elias J.E."/>
            <person name="Goswami T."/>
            <person name="Rad R."/>
            <person name="Beausoleil S.A."/>
            <person name="Villen J."/>
            <person name="Haas W."/>
            <person name="Sowa M.E."/>
            <person name="Gygi S.P."/>
        </authorList>
    </citation>
    <scope>IDENTIFICATION BY MASS SPECTROMETRY [LARGE SCALE ANALYSIS]</scope>
    <source>
        <tissue>Spleen</tissue>
        <tissue>Testis</tissue>
    </source>
</reference>
<reference key="5">
    <citation type="journal article" date="2015" name="Mol. Cell. Biol.">
        <title>A novel interaction of ecdysoneless (ECD) protein with R2TP complex component RUVBL1 is required for the functional role of ECD in cell cycle progression.</title>
        <authorList>
            <person name="Mir R.A."/>
            <person name="Bele A."/>
            <person name="Mirza S."/>
            <person name="Srivastava S."/>
            <person name="Olou A.A."/>
            <person name="Ammons S.A."/>
            <person name="Kim J.H."/>
            <person name="Gurumurthy C.B."/>
            <person name="Qiu F."/>
            <person name="Band H."/>
            <person name="Band V."/>
        </authorList>
    </citation>
    <scope>FUNCTION</scope>
</reference>
<protein>
    <recommendedName>
        <fullName evidence="2">Protein ecdysoneless homolog</fullName>
    </recommendedName>
</protein>
<evidence type="ECO:0000250" key="1">
    <source>
        <dbReference type="UniProtKB" id="O95905"/>
    </source>
</evidence>
<evidence type="ECO:0000250" key="2">
    <source>
        <dbReference type="UniProtKB" id="Q9W032"/>
    </source>
</evidence>
<evidence type="ECO:0000256" key="3">
    <source>
        <dbReference type="SAM" id="MobiDB-lite"/>
    </source>
</evidence>
<evidence type="ECO:0000269" key="4">
    <source>
    </source>
</evidence>
<evidence type="ECO:0000305" key="5"/>
<name>ECD_MOUSE</name>
<feature type="chain" id="PRO_0000220845" description="Protein ecdysoneless homolog">
    <location>
        <begin position="1"/>
        <end position="641"/>
    </location>
</feature>
<feature type="region of interest" description="Transcription activation" evidence="1">
    <location>
        <begin position="439"/>
        <end position="641"/>
    </location>
</feature>
<feature type="region of interest" description="Involved in nuclear export" evidence="1">
    <location>
        <begin position="481"/>
        <end position="497"/>
    </location>
</feature>
<feature type="region of interest" description="Disordered" evidence="3">
    <location>
        <begin position="499"/>
        <end position="521"/>
    </location>
</feature>
<feature type="region of interest" description="Acidic region required for transactivation activity" evidence="1">
    <location>
        <begin position="502"/>
        <end position="531"/>
    </location>
</feature>
<feature type="region of interest" description="Disordered" evidence="3">
    <location>
        <begin position="554"/>
        <end position="586"/>
    </location>
</feature>
<feature type="compositionally biased region" description="Acidic residues" evidence="3">
    <location>
        <begin position="503"/>
        <end position="521"/>
    </location>
</feature>
<feature type="compositionally biased region" description="Basic and acidic residues" evidence="3">
    <location>
        <begin position="561"/>
        <end position="571"/>
    </location>
</feature>
<feature type="modified residue" description="Phosphoserine" evidence="1">
    <location>
        <position position="503"/>
    </location>
</feature>
<feature type="modified residue" description="Phosphoserine" evidence="1">
    <location>
        <position position="505"/>
    </location>
</feature>
<feature type="modified residue" description="Phosphoserine" evidence="1">
    <location>
        <position position="519"/>
    </location>
</feature>
<dbReference type="EMBL" id="AK028664">
    <property type="protein sequence ID" value="BAC26054.1"/>
    <property type="molecule type" value="mRNA"/>
</dbReference>
<dbReference type="EMBL" id="BC013470">
    <property type="protein sequence ID" value="AAH13470.1"/>
    <property type="molecule type" value="mRNA"/>
</dbReference>
<dbReference type="CCDS" id="CCDS26842.1"/>
<dbReference type="RefSeq" id="NP_081751.1">
    <property type="nucleotide sequence ID" value="NM_027475.3"/>
</dbReference>
<dbReference type="SMR" id="Q9CS74"/>
<dbReference type="BioGRID" id="214157">
    <property type="interactions" value="11"/>
</dbReference>
<dbReference type="FunCoup" id="Q9CS74">
    <property type="interactions" value="4515"/>
</dbReference>
<dbReference type="IntAct" id="Q9CS74">
    <property type="interactions" value="13"/>
</dbReference>
<dbReference type="MINT" id="Q9CS74"/>
<dbReference type="STRING" id="10090.ENSMUSP00000022344"/>
<dbReference type="GlyGen" id="Q9CS74">
    <property type="glycosylation" value="2 sites, 1 O-linked glycan (1 site)"/>
</dbReference>
<dbReference type="iPTMnet" id="Q9CS74"/>
<dbReference type="PhosphoSitePlus" id="Q9CS74"/>
<dbReference type="jPOST" id="Q9CS74"/>
<dbReference type="PaxDb" id="10090-ENSMUSP00000022344"/>
<dbReference type="PeptideAtlas" id="Q9CS74"/>
<dbReference type="ProteomicsDB" id="277668"/>
<dbReference type="Pumba" id="Q9CS74"/>
<dbReference type="Antibodypedia" id="29316">
    <property type="antibodies" value="182 antibodies from 26 providers"/>
</dbReference>
<dbReference type="DNASU" id="70601"/>
<dbReference type="Ensembl" id="ENSMUST00000022344.4">
    <property type="protein sequence ID" value="ENSMUSP00000022344.3"/>
    <property type="gene ID" value="ENSMUSG00000021810.4"/>
</dbReference>
<dbReference type="GeneID" id="70601"/>
<dbReference type="KEGG" id="mmu:70601"/>
<dbReference type="UCSC" id="uc011zgo.1">
    <property type="organism name" value="mouse"/>
</dbReference>
<dbReference type="AGR" id="MGI:1917851"/>
<dbReference type="CTD" id="11319"/>
<dbReference type="MGI" id="MGI:1917851">
    <property type="gene designation" value="Ecd"/>
</dbReference>
<dbReference type="VEuPathDB" id="HostDB:ENSMUSG00000021810"/>
<dbReference type="eggNOG" id="KOG2406">
    <property type="taxonomic scope" value="Eukaryota"/>
</dbReference>
<dbReference type="GeneTree" id="ENSGT00390000015361"/>
<dbReference type="HOGENOM" id="CLU_006241_2_0_1"/>
<dbReference type="InParanoid" id="Q9CS74"/>
<dbReference type="OMA" id="TKDYIWQ"/>
<dbReference type="OrthoDB" id="27237at2759"/>
<dbReference type="PhylomeDB" id="Q9CS74"/>
<dbReference type="TreeFam" id="TF324229"/>
<dbReference type="BioGRID-ORCS" id="70601">
    <property type="hits" value="21 hits in 77 CRISPR screens"/>
</dbReference>
<dbReference type="ChiTaRS" id="Ecd">
    <property type="organism name" value="mouse"/>
</dbReference>
<dbReference type="PRO" id="PR:Q9CS74"/>
<dbReference type="Proteomes" id="UP000000589">
    <property type="component" value="Chromosome 14"/>
</dbReference>
<dbReference type="RNAct" id="Q9CS74">
    <property type="molecule type" value="protein"/>
</dbReference>
<dbReference type="Bgee" id="ENSMUSG00000021810">
    <property type="expression patterns" value="Expressed in internal carotid artery and 254 other cell types or tissues"/>
</dbReference>
<dbReference type="ExpressionAtlas" id="Q9CS74">
    <property type="expression patterns" value="baseline and differential"/>
</dbReference>
<dbReference type="GO" id="GO:0005829">
    <property type="term" value="C:cytosol"/>
    <property type="evidence" value="ECO:0007669"/>
    <property type="project" value="Ensembl"/>
</dbReference>
<dbReference type="GO" id="GO:0005654">
    <property type="term" value="C:nucleoplasm"/>
    <property type="evidence" value="ECO:0007669"/>
    <property type="project" value="Ensembl"/>
</dbReference>
<dbReference type="GO" id="GO:0035035">
    <property type="term" value="F:histone acetyltransferase binding"/>
    <property type="evidence" value="ECO:0007669"/>
    <property type="project" value="Ensembl"/>
</dbReference>
<dbReference type="GO" id="GO:0048144">
    <property type="term" value="P:fibroblast proliferation"/>
    <property type="evidence" value="ECO:0000315"/>
    <property type="project" value="MGI"/>
</dbReference>
<dbReference type="GO" id="GO:0006397">
    <property type="term" value="P:mRNA processing"/>
    <property type="evidence" value="ECO:0007669"/>
    <property type="project" value="UniProtKB-KW"/>
</dbReference>
<dbReference type="GO" id="GO:0045944">
    <property type="term" value="P:positive regulation of transcription by RNA polymerase II"/>
    <property type="evidence" value="ECO:0007669"/>
    <property type="project" value="Ensembl"/>
</dbReference>
<dbReference type="GO" id="GO:2000045">
    <property type="term" value="P:regulation of G1/S transition of mitotic cell cycle"/>
    <property type="evidence" value="ECO:0000315"/>
    <property type="project" value="MGI"/>
</dbReference>
<dbReference type="GO" id="GO:0008380">
    <property type="term" value="P:RNA splicing"/>
    <property type="evidence" value="ECO:0007669"/>
    <property type="project" value="UniProtKB-KW"/>
</dbReference>
<dbReference type="InterPro" id="IPR010770">
    <property type="entry name" value="Ecd"/>
</dbReference>
<dbReference type="PANTHER" id="PTHR13060:SF0">
    <property type="entry name" value="PROTEIN ECDYSONELESS HOMOLOG"/>
    <property type="match status" value="1"/>
</dbReference>
<dbReference type="PANTHER" id="PTHR13060">
    <property type="entry name" value="SGT1 PROTEIN HSGT1 SUPPRESSOR OF GCR2"/>
    <property type="match status" value="1"/>
</dbReference>
<dbReference type="Pfam" id="PF07093">
    <property type="entry name" value="SGT1"/>
    <property type="match status" value="1"/>
</dbReference>
<accession>Q9CS74</accession>
<organism>
    <name type="scientific">Mus musculus</name>
    <name type="common">Mouse</name>
    <dbReference type="NCBI Taxonomy" id="10090"/>
    <lineage>
        <taxon>Eukaryota</taxon>
        <taxon>Metazoa</taxon>
        <taxon>Chordata</taxon>
        <taxon>Craniata</taxon>
        <taxon>Vertebrata</taxon>
        <taxon>Euteleostomi</taxon>
        <taxon>Mammalia</taxon>
        <taxon>Eutheria</taxon>
        <taxon>Euarchontoglires</taxon>
        <taxon>Glires</taxon>
        <taxon>Rodentia</taxon>
        <taxon>Myomorpha</taxon>
        <taxon>Muroidea</taxon>
        <taxon>Muridae</taxon>
        <taxon>Murinae</taxon>
        <taxon>Mus</taxon>
        <taxon>Mus</taxon>
    </lineage>
</organism>
<gene>
    <name type="primary">Ecd</name>
</gene>
<keyword id="KW-0010">Activator</keyword>
<keyword id="KW-0963">Cytoplasm</keyword>
<keyword id="KW-0507">mRNA processing</keyword>
<keyword id="KW-0508">mRNA splicing</keyword>
<keyword id="KW-0539">Nucleus</keyword>
<keyword id="KW-0597">Phosphoprotein</keyword>
<keyword id="KW-1185">Reference proteome</keyword>
<keyword id="KW-0804">Transcription</keyword>
<keyword id="KW-0805">Transcription regulation</keyword>